<reference key="1">
    <citation type="submission" date="2006-09" db="EMBL/GenBank/DDBJ databases">
        <title>Complete sequence of chromosome 1 of Shewanella sp. ANA-3.</title>
        <authorList>
            <person name="Copeland A."/>
            <person name="Lucas S."/>
            <person name="Lapidus A."/>
            <person name="Barry K."/>
            <person name="Detter J.C."/>
            <person name="Glavina del Rio T."/>
            <person name="Hammon N."/>
            <person name="Israni S."/>
            <person name="Dalin E."/>
            <person name="Tice H."/>
            <person name="Pitluck S."/>
            <person name="Chertkov O."/>
            <person name="Brettin T."/>
            <person name="Bruce D."/>
            <person name="Han C."/>
            <person name="Tapia R."/>
            <person name="Gilna P."/>
            <person name="Schmutz J."/>
            <person name="Larimer F."/>
            <person name="Land M."/>
            <person name="Hauser L."/>
            <person name="Kyrpides N."/>
            <person name="Kim E."/>
            <person name="Newman D."/>
            <person name="Salticov C."/>
            <person name="Konstantinidis K."/>
            <person name="Klappenback J."/>
            <person name="Tiedje J."/>
            <person name="Richardson P."/>
        </authorList>
    </citation>
    <scope>NUCLEOTIDE SEQUENCE [LARGE SCALE GENOMIC DNA]</scope>
    <source>
        <strain>ANA-3</strain>
    </source>
</reference>
<protein>
    <recommendedName>
        <fullName evidence="1">Phosphoglycerate kinase</fullName>
        <ecNumber evidence="1">2.7.2.3</ecNumber>
    </recommendedName>
</protein>
<comment type="catalytic activity">
    <reaction evidence="1">
        <text>(2R)-3-phosphoglycerate + ATP = (2R)-3-phospho-glyceroyl phosphate + ADP</text>
        <dbReference type="Rhea" id="RHEA:14801"/>
        <dbReference type="ChEBI" id="CHEBI:30616"/>
        <dbReference type="ChEBI" id="CHEBI:57604"/>
        <dbReference type="ChEBI" id="CHEBI:58272"/>
        <dbReference type="ChEBI" id="CHEBI:456216"/>
        <dbReference type="EC" id="2.7.2.3"/>
    </reaction>
</comment>
<comment type="pathway">
    <text evidence="1">Carbohydrate degradation; glycolysis; pyruvate from D-glyceraldehyde 3-phosphate: step 2/5.</text>
</comment>
<comment type="subunit">
    <text evidence="1">Monomer.</text>
</comment>
<comment type="subcellular location">
    <subcellularLocation>
        <location evidence="1">Cytoplasm</location>
    </subcellularLocation>
</comment>
<comment type="similarity">
    <text evidence="1">Belongs to the phosphoglycerate kinase family.</text>
</comment>
<evidence type="ECO:0000255" key="1">
    <source>
        <dbReference type="HAMAP-Rule" id="MF_00145"/>
    </source>
</evidence>
<dbReference type="EC" id="2.7.2.3" evidence="1"/>
<dbReference type="EMBL" id="CP000469">
    <property type="protein sequence ID" value="ABK49575.1"/>
    <property type="molecule type" value="Genomic_DNA"/>
</dbReference>
<dbReference type="RefSeq" id="WP_011718153.1">
    <property type="nucleotide sequence ID" value="NC_008577.1"/>
</dbReference>
<dbReference type="SMR" id="A0L0K6"/>
<dbReference type="STRING" id="94122.Shewana3_3351"/>
<dbReference type="KEGG" id="shn:Shewana3_3351"/>
<dbReference type="eggNOG" id="COG0126">
    <property type="taxonomic scope" value="Bacteria"/>
</dbReference>
<dbReference type="HOGENOM" id="CLU_025427_0_2_6"/>
<dbReference type="OrthoDB" id="9808460at2"/>
<dbReference type="UniPathway" id="UPA00109">
    <property type="reaction ID" value="UER00185"/>
</dbReference>
<dbReference type="Proteomes" id="UP000002589">
    <property type="component" value="Chromosome"/>
</dbReference>
<dbReference type="GO" id="GO:0005829">
    <property type="term" value="C:cytosol"/>
    <property type="evidence" value="ECO:0007669"/>
    <property type="project" value="TreeGrafter"/>
</dbReference>
<dbReference type="GO" id="GO:0043531">
    <property type="term" value="F:ADP binding"/>
    <property type="evidence" value="ECO:0007669"/>
    <property type="project" value="TreeGrafter"/>
</dbReference>
<dbReference type="GO" id="GO:0005524">
    <property type="term" value="F:ATP binding"/>
    <property type="evidence" value="ECO:0007669"/>
    <property type="project" value="UniProtKB-KW"/>
</dbReference>
<dbReference type="GO" id="GO:0004618">
    <property type="term" value="F:phosphoglycerate kinase activity"/>
    <property type="evidence" value="ECO:0007669"/>
    <property type="project" value="UniProtKB-UniRule"/>
</dbReference>
<dbReference type="GO" id="GO:0006094">
    <property type="term" value="P:gluconeogenesis"/>
    <property type="evidence" value="ECO:0007669"/>
    <property type="project" value="TreeGrafter"/>
</dbReference>
<dbReference type="GO" id="GO:0006096">
    <property type="term" value="P:glycolytic process"/>
    <property type="evidence" value="ECO:0007669"/>
    <property type="project" value="UniProtKB-UniRule"/>
</dbReference>
<dbReference type="FunFam" id="3.40.50.1260:FF:000001">
    <property type="entry name" value="Phosphoglycerate kinase"/>
    <property type="match status" value="1"/>
</dbReference>
<dbReference type="FunFam" id="3.40.50.1260:FF:000002">
    <property type="entry name" value="Phosphoglycerate kinase"/>
    <property type="match status" value="1"/>
</dbReference>
<dbReference type="Gene3D" id="3.40.50.1260">
    <property type="entry name" value="Phosphoglycerate kinase, N-terminal domain"/>
    <property type="match status" value="2"/>
</dbReference>
<dbReference type="HAMAP" id="MF_00145">
    <property type="entry name" value="Phosphoglyc_kinase"/>
    <property type="match status" value="1"/>
</dbReference>
<dbReference type="InterPro" id="IPR001576">
    <property type="entry name" value="Phosphoglycerate_kinase"/>
</dbReference>
<dbReference type="InterPro" id="IPR015911">
    <property type="entry name" value="Phosphoglycerate_kinase_CS"/>
</dbReference>
<dbReference type="InterPro" id="IPR015824">
    <property type="entry name" value="Phosphoglycerate_kinase_N"/>
</dbReference>
<dbReference type="InterPro" id="IPR036043">
    <property type="entry name" value="Phosphoglycerate_kinase_sf"/>
</dbReference>
<dbReference type="PANTHER" id="PTHR11406">
    <property type="entry name" value="PHOSPHOGLYCERATE KINASE"/>
    <property type="match status" value="1"/>
</dbReference>
<dbReference type="PANTHER" id="PTHR11406:SF23">
    <property type="entry name" value="PHOSPHOGLYCERATE KINASE 1, CHLOROPLASTIC-RELATED"/>
    <property type="match status" value="1"/>
</dbReference>
<dbReference type="Pfam" id="PF00162">
    <property type="entry name" value="PGK"/>
    <property type="match status" value="1"/>
</dbReference>
<dbReference type="PIRSF" id="PIRSF000724">
    <property type="entry name" value="Pgk"/>
    <property type="match status" value="1"/>
</dbReference>
<dbReference type="PRINTS" id="PR00477">
    <property type="entry name" value="PHGLYCKINASE"/>
</dbReference>
<dbReference type="SUPFAM" id="SSF53748">
    <property type="entry name" value="Phosphoglycerate kinase"/>
    <property type="match status" value="1"/>
</dbReference>
<dbReference type="PROSITE" id="PS00111">
    <property type="entry name" value="PGLYCERATE_KINASE"/>
    <property type="match status" value="1"/>
</dbReference>
<gene>
    <name evidence="1" type="primary">pgk</name>
    <name type="ordered locus">Shewana3_3351</name>
</gene>
<accession>A0L0K6</accession>
<keyword id="KW-0067">ATP-binding</keyword>
<keyword id="KW-0963">Cytoplasm</keyword>
<keyword id="KW-0324">Glycolysis</keyword>
<keyword id="KW-0418">Kinase</keyword>
<keyword id="KW-0547">Nucleotide-binding</keyword>
<keyword id="KW-0808">Transferase</keyword>
<name>PGK_SHESA</name>
<sequence length="391" mass="40676">MAIINMSDLDLQGKRVLIREDLNVPVSNGVVTSDARLRASLPTIELALAKGAAVMVMSHLGRPTEGEYNSEFSMQPVVDYLAKALSCPVRLATDYLDGVEVAVGEVVVFENVRFNKGEKKNDEALSKKMAALCDVYVMDAFGTAHRAEASTNGVGLHAPIACAGPLLAQELEALGKALDNPARPLVAIVGGSKVSTKLTVLESLSGIVDQLVVGGGIANTFIAAAGHNVGKSLYEADLIDEAKRLVANAQSRGGDIPVPTDVVVAGEFSPTAAATLKAVNEVGDSDMIFDIGPDSAEALAKIIESAGTIVWNGPVGVFEFDQFGEGTKRIAQAIADSKAFSIAGGGDTLAAVDKYDIADKVSYISTGGGAFLEFLEGKELPAVAMLKQRGA</sequence>
<organism>
    <name type="scientific">Shewanella sp. (strain ANA-3)</name>
    <dbReference type="NCBI Taxonomy" id="94122"/>
    <lineage>
        <taxon>Bacteria</taxon>
        <taxon>Pseudomonadati</taxon>
        <taxon>Pseudomonadota</taxon>
        <taxon>Gammaproteobacteria</taxon>
        <taxon>Alteromonadales</taxon>
        <taxon>Shewanellaceae</taxon>
        <taxon>Shewanella</taxon>
    </lineage>
</organism>
<proteinExistence type="inferred from homology"/>
<feature type="chain" id="PRO_1000058060" description="Phosphoglycerate kinase">
    <location>
        <begin position="1"/>
        <end position="391"/>
    </location>
</feature>
<feature type="binding site" evidence="1">
    <location>
        <begin position="21"/>
        <end position="23"/>
    </location>
    <ligand>
        <name>substrate</name>
    </ligand>
</feature>
<feature type="binding site" evidence="1">
    <location>
        <position position="36"/>
    </location>
    <ligand>
        <name>substrate</name>
    </ligand>
</feature>
<feature type="binding site" evidence="1">
    <location>
        <begin position="59"/>
        <end position="62"/>
    </location>
    <ligand>
        <name>substrate</name>
    </ligand>
</feature>
<feature type="binding site" evidence="1">
    <location>
        <position position="113"/>
    </location>
    <ligand>
        <name>substrate</name>
    </ligand>
</feature>
<feature type="binding site" evidence="1">
    <location>
        <position position="146"/>
    </location>
    <ligand>
        <name>substrate</name>
    </ligand>
</feature>
<feature type="binding site" evidence="1">
    <location>
        <position position="197"/>
    </location>
    <ligand>
        <name>ATP</name>
        <dbReference type="ChEBI" id="CHEBI:30616"/>
    </ligand>
</feature>
<feature type="binding site" evidence="1">
    <location>
        <position position="319"/>
    </location>
    <ligand>
        <name>ATP</name>
        <dbReference type="ChEBI" id="CHEBI:30616"/>
    </ligand>
</feature>
<feature type="binding site" evidence="1">
    <location>
        <begin position="345"/>
        <end position="348"/>
    </location>
    <ligand>
        <name>ATP</name>
        <dbReference type="ChEBI" id="CHEBI:30616"/>
    </ligand>
</feature>